<organism>
    <name type="scientific">Rattus norvegicus</name>
    <name type="common">Rat</name>
    <dbReference type="NCBI Taxonomy" id="10116"/>
    <lineage>
        <taxon>Eukaryota</taxon>
        <taxon>Metazoa</taxon>
        <taxon>Chordata</taxon>
        <taxon>Craniata</taxon>
        <taxon>Vertebrata</taxon>
        <taxon>Euteleostomi</taxon>
        <taxon>Mammalia</taxon>
        <taxon>Eutheria</taxon>
        <taxon>Euarchontoglires</taxon>
        <taxon>Glires</taxon>
        <taxon>Rodentia</taxon>
        <taxon>Myomorpha</taxon>
        <taxon>Muroidea</taxon>
        <taxon>Muridae</taxon>
        <taxon>Murinae</taxon>
        <taxon>Rattus</taxon>
    </lineage>
</organism>
<sequence length="373" mass="42343">MRSGFLRSARRLWARRAISRMPPPSEELLARGGPLRAFLERRVGSEAGGLDAGSPQLAAAARLLNEKERELRDTESLLHDENEDLKKLAESEIALCQKEIAELKHRIISLLVPSEDMDGSDLILEVTAGVGGQEAMLFTSEMFDMYQQYAAFKRWHFETLEYFPSELGGLRHASASIGGPEAYRHMKFEGGVHRVQRVPKTERQGRIHTSTMTVAILPQPTEIKLVINPKDLRIDTKRASGAGGQHVNTTDSAVRIVHLPTGIISECQQERSQLKNRELAMKKLRARLYSMRLEEETAKRYSARKIQVGTKGRSEKIRTYNFPQNRVTDHRINKSLHDLESFMQGDCLLDDLIQSLKDYSDYESLVEMISRKD</sequence>
<proteinExistence type="evidence at transcript level"/>
<reference key="1">
    <citation type="journal article" date="2004" name="Genome Res.">
        <title>The status, quality, and expansion of the NIH full-length cDNA project: the Mammalian Gene Collection (MGC).</title>
        <authorList>
            <consortium name="The MGC Project Team"/>
        </authorList>
    </citation>
    <scope>NUCLEOTIDE SEQUENCE [LARGE SCALE MRNA]</scope>
    <source>
        <tissue>Placenta</tissue>
    </source>
</reference>
<name>RF1ML_RAT</name>
<accession>Q4V7E5</accession>
<evidence type="ECO:0000250" key="1">
    <source>
        <dbReference type="UniProtKB" id="Q80VP5"/>
    </source>
</evidence>
<evidence type="ECO:0000250" key="2">
    <source>
        <dbReference type="UniProtKB" id="Q9H3J6"/>
    </source>
</evidence>
<evidence type="ECO:0000250" key="3">
    <source>
        <dbReference type="UniProtKB" id="Q9UGC7"/>
    </source>
</evidence>
<evidence type="ECO:0000255" key="4"/>
<evidence type="ECO:0000305" key="5"/>
<protein>
    <recommendedName>
        <fullName>Peptide chain release factor 1-like, mitochondrial</fullName>
    </recommendedName>
    <alternativeName>
        <fullName>Mitochondrial translational release factor 1-like</fullName>
    </alternativeName>
</protein>
<keyword id="KW-0175">Coiled coil</keyword>
<keyword id="KW-0488">Methylation</keyword>
<keyword id="KW-0496">Mitochondrion</keyword>
<keyword id="KW-0648">Protein biosynthesis</keyword>
<keyword id="KW-1185">Reference proteome</keyword>
<keyword id="KW-0809">Transit peptide</keyword>
<feature type="transit peptide" description="Mitochondrion" evidence="4">
    <location>
        <begin position="1"/>
        <end position="13"/>
    </location>
</feature>
<feature type="chain" id="PRO_0000330946" description="Peptide chain release factor 1-like, mitochondrial">
    <location>
        <begin position="14"/>
        <end position="373"/>
    </location>
</feature>
<feature type="region of interest" description="GGQ domain" evidence="1">
    <location>
        <begin position="229"/>
        <end position="293"/>
    </location>
</feature>
<feature type="coiled-coil region" evidence="4">
    <location>
        <begin position="56"/>
        <end position="111"/>
    </location>
</feature>
<feature type="short sequence motif" description="GGQ" evidence="3">
    <location>
        <begin position="243"/>
        <end position="245"/>
    </location>
</feature>
<feature type="modified residue" description="N5-methylglutamine" evidence="3">
    <location>
        <position position="245"/>
    </location>
</feature>
<gene>
    <name type="primary">Mtrf1l</name>
</gene>
<dbReference type="EMBL" id="BC097970">
    <property type="protein sequence ID" value="AAH97970.1"/>
    <property type="molecule type" value="mRNA"/>
</dbReference>
<dbReference type="RefSeq" id="NP_001020894.1">
    <property type="nucleotide sequence ID" value="NM_001025723.3"/>
</dbReference>
<dbReference type="SMR" id="Q4V7E5"/>
<dbReference type="FunCoup" id="Q4V7E5">
    <property type="interactions" value="2826"/>
</dbReference>
<dbReference type="STRING" id="10116.ENSRNOP00000025398"/>
<dbReference type="PhosphoSitePlus" id="Q4V7E5"/>
<dbReference type="PaxDb" id="10116-ENSRNOP00000025398"/>
<dbReference type="GeneID" id="361473"/>
<dbReference type="KEGG" id="rno:361473"/>
<dbReference type="UCSC" id="RGD:1598312">
    <property type="organism name" value="rat"/>
</dbReference>
<dbReference type="AGR" id="RGD:1598312"/>
<dbReference type="CTD" id="54516"/>
<dbReference type="RGD" id="1598312">
    <property type="gene designation" value="Mtrf1l"/>
</dbReference>
<dbReference type="VEuPathDB" id="HostDB:ENSRNOG00000018773"/>
<dbReference type="eggNOG" id="KOG2726">
    <property type="taxonomic scope" value="Eukaryota"/>
</dbReference>
<dbReference type="HOGENOM" id="CLU_036856_0_3_1"/>
<dbReference type="InParanoid" id="Q4V7E5"/>
<dbReference type="OrthoDB" id="47731at9989"/>
<dbReference type="PhylomeDB" id="Q4V7E5"/>
<dbReference type="TreeFam" id="TF313720"/>
<dbReference type="Reactome" id="R-RNO-5419276">
    <property type="pathway name" value="Mitochondrial translation termination"/>
</dbReference>
<dbReference type="PRO" id="PR:Q4V7E5"/>
<dbReference type="Proteomes" id="UP000002494">
    <property type="component" value="Chromosome 1"/>
</dbReference>
<dbReference type="Bgee" id="ENSRNOG00000018773">
    <property type="expression patterns" value="Expressed in quadriceps femoris and 20 other cell types or tissues"/>
</dbReference>
<dbReference type="GO" id="GO:0005739">
    <property type="term" value="C:mitochondrion"/>
    <property type="evidence" value="ECO:0000250"/>
    <property type="project" value="UniProtKB"/>
</dbReference>
<dbReference type="GO" id="GO:0003747">
    <property type="term" value="F:translation release factor activity"/>
    <property type="evidence" value="ECO:0000250"/>
    <property type="project" value="UniProtKB"/>
</dbReference>
<dbReference type="GO" id="GO:0016149">
    <property type="term" value="F:translation release factor activity, codon specific"/>
    <property type="evidence" value="ECO:0000266"/>
    <property type="project" value="RGD"/>
</dbReference>
<dbReference type="GO" id="GO:0070126">
    <property type="term" value="P:mitochondrial translational termination"/>
    <property type="evidence" value="ECO:0000250"/>
    <property type="project" value="UniProtKB"/>
</dbReference>
<dbReference type="FunFam" id="3.30.160.20:FF:000004">
    <property type="entry name" value="Peptide chain release factor 1"/>
    <property type="match status" value="1"/>
</dbReference>
<dbReference type="FunFam" id="3.30.70.1660:FF:000004">
    <property type="entry name" value="Peptide chain release factor 1"/>
    <property type="match status" value="1"/>
</dbReference>
<dbReference type="FunFam" id="3.30.70.1660:FF:000011">
    <property type="entry name" value="Peptide chain release factor 1-like, mitochondrial"/>
    <property type="match status" value="1"/>
</dbReference>
<dbReference type="Gene3D" id="3.30.160.20">
    <property type="match status" value="1"/>
</dbReference>
<dbReference type="Gene3D" id="3.30.70.1660">
    <property type="match status" value="2"/>
</dbReference>
<dbReference type="Gene3D" id="6.10.140.1950">
    <property type="match status" value="1"/>
</dbReference>
<dbReference type="InterPro" id="IPR005139">
    <property type="entry name" value="PCRF"/>
</dbReference>
<dbReference type="InterPro" id="IPR000352">
    <property type="entry name" value="Pep_chain_release_fac_I"/>
</dbReference>
<dbReference type="InterPro" id="IPR045853">
    <property type="entry name" value="Pep_chain_release_fac_I_sf"/>
</dbReference>
<dbReference type="InterPro" id="IPR050057">
    <property type="entry name" value="Prokaryotic/Mito_RF"/>
</dbReference>
<dbReference type="NCBIfam" id="NF001859">
    <property type="entry name" value="PRK00591.1"/>
    <property type="match status" value="1"/>
</dbReference>
<dbReference type="PANTHER" id="PTHR43804">
    <property type="entry name" value="LD18447P"/>
    <property type="match status" value="1"/>
</dbReference>
<dbReference type="PANTHER" id="PTHR43804:SF3">
    <property type="entry name" value="PEPTIDE CHAIN RELEASE FACTOR 1-LIKE, MITOCHONDRIAL"/>
    <property type="match status" value="1"/>
</dbReference>
<dbReference type="Pfam" id="PF03462">
    <property type="entry name" value="PCRF"/>
    <property type="match status" value="1"/>
</dbReference>
<dbReference type="Pfam" id="PF00472">
    <property type="entry name" value="RF-1"/>
    <property type="match status" value="1"/>
</dbReference>
<dbReference type="SMART" id="SM00937">
    <property type="entry name" value="PCRF"/>
    <property type="match status" value="1"/>
</dbReference>
<dbReference type="SUPFAM" id="SSF75620">
    <property type="entry name" value="Release factor"/>
    <property type="match status" value="1"/>
</dbReference>
<dbReference type="PROSITE" id="PS00745">
    <property type="entry name" value="RF_PROK_I"/>
    <property type="match status" value="1"/>
</dbReference>
<comment type="function">
    <text evidence="3">Mitochondrial peptide chain release factor that directs the termination of translation in response to the peptide chain termination codons UAA and UAG.</text>
</comment>
<comment type="subcellular location">
    <subcellularLocation>
        <location evidence="3">Mitochondrion</location>
    </subcellularLocation>
</comment>
<comment type="domain">
    <text evidence="2">The GGQ domain interacts with the peptidyltransferase center (PTC) of the large ribosomal subunit to trigger nascent chain hydrolysis.</text>
</comment>
<comment type="PTM">
    <text evidence="3">Methylation of glutamine in the GGQ triplet by HEMK1 is conserved from bacteria to mammals.</text>
</comment>
<comment type="similarity">
    <text evidence="5">Belongs to the prokaryotic/mitochondrial release factor family.</text>
</comment>